<accession>Q5ZJA3</accession>
<gene>
    <name type="primary">CDR2</name>
    <name type="ORF">RCJMB04_19l3</name>
</gene>
<sequence length="456" mass="52847">MLADSLVEEFEIREDEPWYDQQDLQQDLHLAAELGKTLLDRNTELEESLQQMYATNQEQLQEIEYLTKQVELLRQMNDQHAKVYEQLDVTARELEDTNQKLVAESRASQQKILSLTETIENLQTHVDDLQRQVEELKKSGRGRMNHERSDQPRSMHSFSCLKELYDLRQYFVYDHVFAEKITSMDSQLNPLEEENENLKKAVTVLQAQLTLEKEKRVTMEEEYSLVVKENCDLEQRLVDIDLYRARAEELEVEVAEMRQMLQSENTIHSAEKLVPESFFISFKESLERELGQSPADDGLLTVPELDKKALKRSSSENFLSSAAGGDILRGHEETCIRRAEAVKQRGISVLNEVDAQYNALKVKYEELLKKCQIDEDSLKHKAVQTLKQYSKDSVGNTQYDLSANNQEFTNAGELLSSTNTLPEYKALFKEIFSCIKKTKEEIDEHRSKYKSLSSQP</sequence>
<dbReference type="EMBL" id="AJ720531">
    <property type="protein sequence ID" value="CAG32190.1"/>
    <property type="molecule type" value="mRNA"/>
</dbReference>
<dbReference type="RefSeq" id="NP_001025813.1">
    <property type="nucleotide sequence ID" value="NM_001030642.1"/>
</dbReference>
<dbReference type="SMR" id="Q5ZJA3"/>
<dbReference type="FunCoup" id="Q5ZJA3">
    <property type="interactions" value="192"/>
</dbReference>
<dbReference type="STRING" id="9031.ENSGALP00000041646"/>
<dbReference type="PaxDb" id="9031-ENSGALP00000041646"/>
<dbReference type="GeneID" id="416621"/>
<dbReference type="KEGG" id="gga:416621"/>
<dbReference type="CTD" id="1039"/>
<dbReference type="VEuPathDB" id="HostDB:geneid_416621"/>
<dbReference type="eggNOG" id="ENOG502QUPP">
    <property type="taxonomic scope" value="Eukaryota"/>
</dbReference>
<dbReference type="InParanoid" id="Q5ZJA3"/>
<dbReference type="OrthoDB" id="10059415at2759"/>
<dbReference type="PhylomeDB" id="Q5ZJA3"/>
<dbReference type="PRO" id="PR:Q5ZJA3"/>
<dbReference type="Proteomes" id="UP000000539">
    <property type="component" value="Unassembled WGS sequence"/>
</dbReference>
<dbReference type="GO" id="GO:0005737">
    <property type="term" value="C:cytoplasm"/>
    <property type="evidence" value="ECO:0000250"/>
    <property type="project" value="AgBase"/>
</dbReference>
<dbReference type="InterPro" id="IPR026079">
    <property type="entry name" value="CDR2"/>
</dbReference>
<dbReference type="PANTHER" id="PTHR19232">
    <property type="entry name" value="CENTROCORTIN FAMILY MEMBER"/>
    <property type="match status" value="1"/>
</dbReference>
<dbReference type="PANTHER" id="PTHR19232:SF1">
    <property type="entry name" value="CEREBELLAR DEGENERATION-RELATED PROTEIN 2"/>
    <property type="match status" value="1"/>
</dbReference>
<evidence type="ECO:0000255" key="1"/>
<evidence type="ECO:0000305" key="2"/>
<keyword id="KW-0175">Coiled coil</keyword>
<keyword id="KW-1185">Reference proteome</keyword>
<proteinExistence type="evidence at transcript level"/>
<comment type="similarity">
    <text evidence="2">Belongs to the CDR2 family.</text>
</comment>
<organism>
    <name type="scientific">Gallus gallus</name>
    <name type="common">Chicken</name>
    <dbReference type="NCBI Taxonomy" id="9031"/>
    <lineage>
        <taxon>Eukaryota</taxon>
        <taxon>Metazoa</taxon>
        <taxon>Chordata</taxon>
        <taxon>Craniata</taxon>
        <taxon>Vertebrata</taxon>
        <taxon>Euteleostomi</taxon>
        <taxon>Archelosauria</taxon>
        <taxon>Archosauria</taxon>
        <taxon>Dinosauria</taxon>
        <taxon>Saurischia</taxon>
        <taxon>Theropoda</taxon>
        <taxon>Coelurosauria</taxon>
        <taxon>Aves</taxon>
        <taxon>Neognathae</taxon>
        <taxon>Galloanserae</taxon>
        <taxon>Galliformes</taxon>
        <taxon>Phasianidae</taxon>
        <taxon>Phasianinae</taxon>
        <taxon>Gallus</taxon>
    </lineage>
</organism>
<reference key="1">
    <citation type="journal article" date="2005" name="Genome Biol.">
        <title>Full-length cDNAs from chicken bursal lymphocytes to facilitate gene function analysis.</title>
        <authorList>
            <person name="Caldwell R.B."/>
            <person name="Kierzek A.M."/>
            <person name="Arakawa H."/>
            <person name="Bezzubov Y."/>
            <person name="Zaim J."/>
            <person name="Fiedler P."/>
            <person name="Kutter S."/>
            <person name="Blagodatski A."/>
            <person name="Kostovska D."/>
            <person name="Koter M."/>
            <person name="Plachy J."/>
            <person name="Carninci P."/>
            <person name="Hayashizaki Y."/>
            <person name="Buerstedde J.-M."/>
        </authorList>
    </citation>
    <scope>NUCLEOTIDE SEQUENCE [LARGE SCALE MRNA]</scope>
    <source>
        <strain>CB</strain>
        <tissue>Bursa of Fabricius</tissue>
    </source>
</reference>
<protein>
    <recommendedName>
        <fullName>Cerebellar degeneration-related protein 2</fullName>
    </recommendedName>
</protein>
<name>CDR2_CHICK</name>
<feature type="chain" id="PRO_0000307233" description="Cerebellar degeneration-related protein 2">
    <location>
        <begin position="1"/>
        <end position="456"/>
    </location>
</feature>
<feature type="coiled-coil region" evidence="1">
    <location>
        <begin position="38"/>
        <end position="142"/>
    </location>
</feature>
<feature type="coiled-coil region" evidence="1">
    <location>
        <begin position="178"/>
        <end position="268"/>
    </location>
</feature>
<feature type="coiled-coil region" evidence="1">
    <location>
        <begin position="348"/>
        <end position="376"/>
    </location>
</feature>